<feature type="chain" id="PRO_0000299787" description="Putative UPF0479 protein YIL177W-A">
    <location>
        <begin position="1"/>
        <end position="160"/>
    </location>
</feature>
<feature type="transmembrane region" description="Helical" evidence="1">
    <location>
        <begin position="39"/>
        <end position="59"/>
    </location>
</feature>
<feature type="transmembrane region" description="Helical" evidence="1">
    <location>
        <begin position="136"/>
        <end position="156"/>
    </location>
</feature>
<dbReference type="EMBL" id="Z46921">
    <property type="status" value="NOT_ANNOTATED_CDS"/>
    <property type="molecule type" value="Genomic_DNA"/>
</dbReference>
<dbReference type="EMBL" id="Z48148">
    <property type="status" value="NOT_ANNOTATED_CDS"/>
    <property type="molecule type" value="Genomic_DNA"/>
</dbReference>
<dbReference type="EMBL" id="AF480000">
    <property type="protein sequence ID" value="AAL79313.1"/>
    <property type="molecule type" value="Genomic_DNA"/>
</dbReference>
<dbReference type="TopDownProteomics" id="P0CL41"/>
<dbReference type="EnsemblFungi" id="YIL177W-A_mRNA">
    <property type="protein sequence ID" value="YIL177W-A"/>
    <property type="gene ID" value="YIL177W-A"/>
</dbReference>
<dbReference type="EnsemblFungi" id="YJL225W-A_mRNA">
    <property type="protein sequence ID" value="YJL225W-A"/>
    <property type="gene ID" value="YJL225W-A"/>
</dbReference>
<dbReference type="AGR" id="SGD:S000028658"/>
<dbReference type="SGD" id="S000028658">
    <property type="gene designation" value="YIL177W-A"/>
</dbReference>
<dbReference type="HOGENOM" id="CLU_139933_0_0_1"/>
<dbReference type="GO" id="GO:0016020">
    <property type="term" value="C:membrane"/>
    <property type="evidence" value="ECO:0007669"/>
    <property type="project" value="UniProtKB-SubCell"/>
</dbReference>
<comment type="subcellular location">
    <subcellularLocation>
        <location evidence="2">Membrane</location>
        <topology evidence="2">Multi-pass membrane protein</topology>
    </subcellularLocation>
</comment>
<comment type="miscellaneous">
    <text evidence="2">Completely overlaps YIL177C.</text>
</comment>
<comment type="similarity">
    <text evidence="2">Belongs to the UPF0479 family.</text>
</comment>
<comment type="caution">
    <text evidence="3">Product of a dubious gene prediction unlikely to encode a functional protein. Because of that it is not part of the S.cerevisiae S288c complete/reference proteome set.</text>
</comment>
<name>YJ255_YEAST</name>
<accession>P0CL41</accession>
<accession>Q8TFD1</accession>
<reference key="1">
    <citation type="journal article" date="1997" name="Nature">
        <title>The nucleotide sequence of Saccharomyces cerevisiae chromosome IX.</title>
        <authorList>
            <person name="Churcher C.M."/>
            <person name="Bowman S."/>
            <person name="Badcock K."/>
            <person name="Bankier A.T."/>
            <person name="Brown D."/>
            <person name="Chillingworth T."/>
            <person name="Connor R."/>
            <person name="Devlin K."/>
            <person name="Gentles S."/>
            <person name="Hamlin N."/>
            <person name="Harris D.E."/>
            <person name="Horsnell T."/>
            <person name="Hunt S."/>
            <person name="Jagels K."/>
            <person name="Jones M."/>
            <person name="Lye G."/>
            <person name="Moule S."/>
            <person name="Odell C."/>
            <person name="Pearson D."/>
            <person name="Rajandream M.A."/>
            <person name="Rice P."/>
            <person name="Rowley N."/>
            <person name="Skelton J."/>
            <person name="Smith V."/>
            <person name="Walsh S.V."/>
            <person name="Whitehead S."/>
            <person name="Barrell B.G."/>
        </authorList>
    </citation>
    <scope>NUCLEOTIDE SEQUENCE [LARGE SCALE GENOMIC DNA]</scope>
    <source>
        <strain>ATCC 204508 / S288c</strain>
    </source>
</reference>
<reference key="2">
    <citation type="journal article" date="2014" name="G3 (Bethesda)">
        <title>The reference genome sequence of Saccharomyces cerevisiae: Then and now.</title>
        <authorList>
            <person name="Engel S.R."/>
            <person name="Dietrich F.S."/>
            <person name="Fisk D.G."/>
            <person name="Binkley G."/>
            <person name="Balakrishnan R."/>
            <person name="Costanzo M.C."/>
            <person name="Dwight S.S."/>
            <person name="Hitz B.C."/>
            <person name="Karra K."/>
            <person name="Nash R.S."/>
            <person name="Weng S."/>
            <person name="Wong E.D."/>
            <person name="Lloyd P."/>
            <person name="Skrzypek M.S."/>
            <person name="Miyasato S.R."/>
            <person name="Simison M."/>
            <person name="Cherry J.M."/>
        </authorList>
    </citation>
    <scope>GENOME REANNOTATION</scope>
    <source>
        <strain>ATCC 204508 / S288c</strain>
    </source>
</reference>
<reference key="3">
    <citation type="journal article" date="2002" name="Nat. Biotechnol.">
        <title>An integrated approach for finding overlooked genes in yeast.</title>
        <authorList>
            <person name="Kumar A."/>
            <person name="Harrison P.M."/>
            <person name="Cheung K.-H."/>
            <person name="Lan N."/>
            <person name="Echols N."/>
            <person name="Bertone P."/>
            <person name="Miller P."/>
            <person name="Gerstein M.B."/>
            <person name="Snyder M."/>
        </authorList>
    </citation>
    <scope>NUCLEOTIDE SEQUENCE [GENOMIC DNA]</scope>
</reference>
<protein>
    <recommendedName>
        <fullName>Putative UPF0479 protein YIL177W-A</fullName>
    </recommendedName>
</protein>
<evidence type="ECO:0000255" key="1"/>
<evidence type="ECO:0000305" key="2"/>
<evidence type="ECO:0000305" key="3">
    <source>
    </source>
</evidence>
<gene>
    <name type="ordered locus">YIL177W-A</name>
</gene>
<organism>
    <name type="scientific">Saccharomyces cerevisiae (strain ATCC 204508 / S288c)</name>
    <name type="common">Baker's yeast</name>
    <dbReference type="NCBI Taxonomy" id="559292"/>
    <lineage>
        <taxon>Eukaryota</taxon>
        <taxon>Fungi</taxon>
        <taxon>Dikarya</taxon>
        <taxon>Ascomycota</taxon>
        <taxon>Saccharomycotina</taxon>
        <taxon>Saccharomycetes</taxon>
        <taxon>Saccharomycetales</taxon>
        <taxon>Saccharomycetaceae</taxon>
        <taxon>Saccharomyces</taxon>
    </lineage>
</organism>
<sequence length="160" mass="18605">MMPAKLQLDVLRTLQSSARHGTQTLKNSTFLERFHNNRIVFCLPFFLALFFVPVQKVLQHLCLRFTQVAPYFKIQLFDLPSRHAENLAPLLASCRIQYTNCFSSSSNGQVPSIISLYLRVDLSPFYAKIFQISYRVPMIWLDVFQVFFVFLVISQHSLHS</sequence>
<keyword id="KW-0472">Membrane</keyword>
<keyword id="KW-0812">Transmembrane</keyword>
<keyword id="KW-1133">Transmembrane helix</keyword>
<proteinExistence type="uncertain"/>